<comment type="function">
    <text evidence="1">Catalyzes the removal of transit peptides required for the targeting of proteins from the mitochondrial matrix, across the inner membrane, into the inter-membrane space. Known to process the nuclear encoded protein DIABLO (By similarity).</text>
</comment>
<comment type="subunit">
    <text evidence="1">Heterodimer of 2 subunits, IMMPL1 and IMMPL2.</text>
</comment>
<comment type="subcellular location">
    <subcellularLocation>
        <location evidence="1">Mitochondrion inner membrane</location>
    </subcellularLocation>
</comment>
<comment type="similarity">
    <text evidence="2">Belongs to the peptidase S26 family. IMP1 subfamily.</text>
</comment>
<proteinExistence type="evidence at protein level"/>
<feature type="chain" id="PRO_0000259574" description="Mitochondrial inner membrane protease subunit 1">
    <location>
        <begin position="1"/>
        <end position="166"/>
    </location>
</feature>
<feature type="active site" evidence="1">
    <location>
        <position position="40"/>
    </location>
</feature>
<feature type="active site" evidence="1">
    <location>
        <position position="83"/>
    </location>
</feature>
<feature type="sequence conflict" description="In Ref. 1; BAE40162." evidence="2" ref="1">
    <original>L</original>
    <variation>F</variation>
    <location>
        <position position="94"/>
    </location>
</feature>
<feature type="sequence conflict" description="In Ref. 1; BAE40162." evidence="2" ref="1">
    <original>D</original>
    <variation>A</variation>
    <location>
        <position position="166"/>
    </location>
</feature>
<accession>Q9CQU8</accession>
<accession>Q3THN4</accession>
<evidence type="ECO:0000250" key="1"/>
<evidence type="ECO:0000305" key="2"/>
<name>IMP1L_MOUSE</name>
<gene>
    <name type="primary">Immp1l</name>
</gene>
<keyword id="KW-0378">Hydrolase</keyword>
<keyword id="KW-0472">Membrane</keyword>
<keyword id="KW-0496">Mitochondrion</keyword>
<keyword id="KW-0999">Mitochondrion inner membrane</keyword>
<keyword id="KW-0645">Protease</keyword>
<keyword id="KW-1185">Reference proteome</keyword>
<organism>
    <name type="scientific">Mus musculus</name>
    <name type="common">Mouse</name>
    <dbReference type="NCBI Taxonomy" id="10090"/>
    <lineage>
        <taxon>Eukaryota</taxon>
        <taxon>Metazoa</taxon>
        <taxon>Chordata</taxon>
        <taxon>Craniata</taxon>
        <taxon>Vertebrata</taxon>
        <taxon>Euteleostomi</taxon>
        <taxon>Mammalia</taxon>
        <taxon>Eutheria</taxon>
        <taxon>Euarchontoglires</taxon>
        <taxon>Glires</taxon>
        <taxon>Rodentia</taxon>
        <taxon>Myomorpha</taxon>
        <taxon>Muroidea</taxon>
        <taxon>Muridae</taxon>
        <taxon>Murinae</taxon>
        <taxon>Mus</taxon>
        <taxon>Mus</taxon>
    </lineage>
</organism>
<dbReference type="EC" id="3.4.21.-"/>
<dbReference type="EMBL" id="AK005356">
    <property type="protein sequence ID" value="BAB23971.1"/>
    <property type="molecule type" value="mRNA"/>
</dbReference>
<dbReference type="EMBL" id="AK009570">
    <property type="protein sequence ID" value="BAB26367.1"/>
    <property type="molecule type" value="mRNA"/>
</dbReference>
<dbReference type="EMBL" id="AK010075">
    <property type="protein sequence ID" value="BAB26684.1"/>
    <property type="molecule type" value="mRNA"/>
</dbReference>
<dbReference type="EMBL" id="AK011278">
    <property type="protein sequence ID" value="BAB27512.1"/>
    <property type="molecule type" value="mRNA"/>
</dbReference>
<dbReference type="EMBL" id="AK011382">
    <property type="protein sequence ID" value="BAB27582.1"/>
    <property type="molecule type" value="mRNA"/>
</dbReference>
<dbReference type="EMBL" id="AK011420">
    <property type="protein sequence ID" value="BAB27608.1"/>
    <property type="molecule type" value="mRNA"/>
</dbReference>
<dbReference type="EMBL" id="AK011466">
    <property type="protein sequence ID" value="BAB27637.1"/>
    <property type="molecule type" value="mRNA"/>
</dbReference>
<dbReference type="EMBL" id="AK011618">
    <property type="protein sequence ID" value="BAB27737.1"/>
    <property type="molecule type" value="mRNA"/>
</dbReference>
<dbReference type="EMBL" id="AK011872">
    <property type="protein sequence ID" value="BAB27891.1"/>
    <property type="molecule type" value="mRNA"/>
</dbReference>
<dbReference type="EMBL" id="AK012181">
    <property type="protein sequence ID" value="BAB28082.1"/>
    <property type="molecule type" value="mRNA"/>
</dbReference>
<dbReference type="EMBL" id="AK015978">
    <property type="protein sequence ID" value="BAB30062.1"/>
    <property type="molecule type" value="mRNA"/>
</dbReference>
<dbReference type="EMBL" id="AK078300">
    <property type="protein sequence ID" value="BAC37210.1"/>
    <property type="molecule type" value="mRNA"/>
</dbReference>
<dbReference type="EMBL" id="AK135670">
    <property type="protein sequence ID" value="BAE22608.1"/>
    <property type="molecule type" value="mRNA"/>
</dbReference>
<dbReference type="EMBL" id="AK168202">
    <property type="protein sequence ID" value="BAE40162.1"/>
    <property type="molecule type" value="mRNA"/>
</dbReference>
<dbReference type="EMBL" id="BC008259">
    <property type="protein sequence ID" value="AAH08259.1"/>
    <property type="molecule type" value="mRNA"/>
</dbReference>
<dbReference type="EMBL" id="BC081433">
    <property type="protein sequence ID" value="AAH81433.1"/>
    <property type="molecule type" value="mRNA"/>
</dbReference>
<dbReference type="CCDS" id="CCDS38192.1"/>
<dbReference type="RefSeq" id="NP_082536.1">
    <property type="nucleotide sequence ID" value="NM_028260.3"/>
</dbReference>
<dbReference type="SMR" id="Q9CQU8"/>
<dbReference type="FunCoup" id="Q9CQU8">
    <property type="interactions" value="2199"/>
</dbReference>
<dbReference type="STRING" id="10090.ENSMUSP00000049044"/>
<dbReference type="PhosphoSitePlus" id="Q9CQU8"/>
<dbReference type="PaxDb" id="10090-ENSMUSP00000049044"/>
<dbReference type="PeptideAtlas" id="Q9CQU8"/>
<dbReference type="ProteomicsDB" id="269478"/>
<dbReference type="Antibodypedia" id="49000">
    <property type="antibodies" value="83 antibodies from 24 providers"/>
</dbReference>
<dbReference type="DNASU" id="66541"/>
<dbReference type="Ensembl" id="ENSMUST00000037499.6">
    <property type="protein sequence ID" value="ENSMUSP00000049044.6"/>
    <property type="gene ID" value="ENSMUSG00000042670.6"/>
</dbReference>
<dbReference type="GeneID" id="66541"/>
<dbReference type="KEGG" id="mmu:66541"/>
<dbReference type="UCSC" id="uc008lle.1">
    <property type="organism name" value="mouse"/>
</dbReference>
<dbReference type="AGR" id="MGI:1913791"/>
<dbReference type="CTD" id="196294"/>
<dbReference type="MGI" id="MGI:1913791">
    <property type="gene designation" value="Immp1l"/>
</dbReference>
<dbReference type="VEuPathDB" id="HostDB:ENSMUSG00000042670"/>
<dbReference type="eggNOG" id="KOG0171">
    <property type="taxonomic scope" value="Eukaryota"/>
</dbReference>
<dbReference type="GeneTree" id="ENSGT00550000075025"/>
<dbReference type="HOGENOM" id="CLU_028723_4_3_1"/>
<dbReference type="InParanoid" id="Q9CQU8"/>
<dbReference type="OMA" id="LCKGPSM"/>
<dbReference type="OrthoDB" id="308440at2759"/>
<dbReference type="PhylomeDB" id="Q9CQU8"/>
<dbReference type="TreeFam" id="TF315083"/>
<dbReference type="BioGRID-ORCS" id="66541">
    <property type="hits" value="3 hits in 77 CRISPR screens"/>
</dbReference>
<dbReference type="ChiTaRS" id="Immp1l">
    <property type="organism name" value="mouse"/>
</dbReference>
<dbReference type="PRO" id="PR:Q9CQU8"/>
<dbReference type="Proteomes" id="UP000000589">
    <property type="component" value="Chromosome 2"/>
</dbReference>
<dbReference type="RNAct" id="Q9CQU8">
    <property type="molecule type" value="protein"/>
</dbReference>
<dbReference type="Bgee" id="ENSMUSG00000042670">
    <property type="expression patterns" value="Expressed in animal zygote and 66 other cell types or tissues"/>
</dbReference>
<dbReference type="GO" id="GO:0005743">
    <property type="term" value="C:mitochondrial inner membrane"/>
    <property type="evidence" value="ECO:0007669"/>
    <property type="project" value="UniProtKB-SubCell"/>
</dbReference>
<dbReference type="GO" id="GO:0005739">
    <property type="term" value="C:mitochondrion"/>
    <property type="evidence" value="ECO:0000314"/>
    <property type="project" value="MGI"/>
</dbReference>
<dbReference type="GO" id="GO:0004252">
    <property type="term" value="F:serine-type endopeptidase activity"/>
    <property type="evidence" value="ECO:0007669"/>
    <property type="project" value="InterPro"/>
</dbReference>
<dbReference type="GO" id="GO:0006465">
    <property type="term" value="P:signal peptide processing"/>
    <property type="evidence" value="ECO:0007669"/>
    <property type="project" value="InterPro"/>
</dbReference>
<dbReference type="CDD" id="cd06530">
    <property type="entry name" value="S26_SPase_I"/>
    <property type="match status" value="1"/>
</dbReference>
<dbReference type="FunFam" id="2.10.109.10:FF:000010">
    <property type="entry name" value="Mitochondrial inner membrane protease subunit"/>
    <property type="match status" value="1"/>
</dbReference>
<dbReference type="Gene3D" id="2.10.109.10">
    <property type="entry name" value="Umud Fragment, subunit A"/>
    <property type="match status" value="1"/>
</dbReference>
<dbReference type="InterPro" id="IPR036286">
    <property type="entry name" value="LexA/Signal_pep-like_sf"/>
</dbReference>
<dbReference type="InterPro" id="IPR052064">
    <property type="entry name" value="Mito_IMP1_subunit"/>
</dbReference>
<dbReference type="InterPro" id="IPR000223">
    <property type="entry name" value="Pept_S26A_signal_pept_1"/>
</dbReference>
<dbReference type="InterPro" id="IPR019533">
    <property type="entry name" value="Peptidase_S26"/>
</dbReference>
<dbReference type="NCBIfam" id="TIGR02227">
    <property type="entry name" value="sigpep_I_bact"/>
    <property type="match status" value="1"/>
</dbReference>
<dbReference type="PANTHER" id="PTHR12383:SF16">
    <property type="entry name" value="MITOCHONDRIAL INNER MEMBRANE PROTEASE SUBUNIT 1"/>
    <property type="match status" value="1"/>
</dbReference>
<dbReference type="PANTHER" id="PTHR12383">
    <property type="entry name" value="PROTEASE FAMILY S26 MITOCHONDRIAL INNER MEMBRANE PROTEASE-RELATED"/>
    <property type="match status" value="1"/>
</dbReference>
<dbReference type="Pfam" id="PF10502">
    <property type="entry name" value="Peptidase_S26"/>
    <property type="match status" value="2"/>
</dbReference>
<dbReference type="PRINTS" id="PR00727">
    <property type="entry name" value="LEADERPTASE"/>
</dbReference>
<dbReference type="SUPFAM" id="SSF51306">
    <property type="entry name" value="LexA/Signal peptidase"/>
    <property type="match status" value="1"/>
</dbReference>
<sequence>MLRGVLGKAFRLAGYTIQYGCIAHCAFEYVGGVVMCSGPSMEPTIQNSDIVFAENLSRHFYGIQRGDIVIAKSPSDPKSNICKRVIGLEGDKILSTSPSDVFKSRSYVPTGHVWLEGDNLQNSTDSRYYGPIPYGLIRGRIFFKIWPFSDFGFLRDSPNGQRFSDD</sequence>
<protein>
    <recommendedName>
        <fullName>Mitochondrial inner membrane protease subunit 1</fullName>
        <ecNumber>3.4.21.-</ecNumber>
    </recommendedName>
    <alternativeName>
        <fullName>IMP1-like protein</fullName>
    </alternativeName>
</protein>
<reference key="1">
    <citation type="journal article" date="2005" name="Science">
        <title>The transcriptional landscape of the mammalian genome.</title>
        <authorList>
            <person name="Carninci P."/>
            <person name="Kasukawa T."/>
            <person name="Katayama S."/>
            <person name="Gough J."/>
            <person name="Frith M.C."/>
            <person name="Maeda N."/>
            <person name="Oyama R."/>
            <person name="Ravasi T."/>
            <person name="Lenhard B."/>
            <person name="Wells C."/>
            <person name="Kodzius R."/>
            <person name="Shimokawa K."/>
            <person name="Bajic V.B."/>
            <person name="Brenner S.E."/>
            <person name="Batalov S."/>
            <person name="Forrest A.R."/>
            <person name="Zavolan M."/>
            <person name="Davis M.J."/>
            <person name="Wilming L.G."/>
            <person name="Aidinis V."/>
            <person name="Allen J.E."/>
            <person name="Ambesi-Impiombato A."/>
            <person name="Apweiler R."/>
            <person name="Aturaliya R.N."/>
            <person name="Bailey T.L."/>
            <person name="Bansal M."/>
            <person name="Baxter L."/>
            <person name="Beisel K.W."/>
            <person name="Bersano T."/>
            <person name="Bono H."/>
            <person name="Chalk A.M."/>
            <person name="Chiu K.P."/>
            <person name="Choudhary V."/>
            <person name="Christoffels A."/>
            <person name="Clutterbuck D.R."/>
            <person name="Crowe M.L."/>
            <person name="Dalla E."/>
            <person name="Dalrymple B.P."/>
            <person name="de Bono B."/>
            <person name="Della Gatta G."/>
            <person name="di Bernardo D."/>
            <person name="Down T."/>
            <person name="Engstrom P."/>
            <person name="Fagiolini M."/>
            <person name="Faulkner G."/>
            <person name="Fletcher C.F."/>
            <person name="Fukushima T."/>
            <person name="Furuno M."/>
            <person name="Futaki S."/>
            <person name="Gariboldi M."/>
            <person name="Georgii-Hemming P."/>
            <person name="Gingeras T.R."/>
            <person name="Gojobori T."/>
            <person name="Green R.E."/>
            <person name="Gustincich S."/>
            <person name="Harbers M."/>
            <person name="Hayashi Y."/>
            <person name="Hensch T.K."/>
            <person name="Hirokawa N."/>
            <person name="Hill D."/>
            <person name="Huminiecki L."/>
            <person name="Iacono M."/>
            <person name="Ikeo K."/>
            <person name="Iwama A."/>
            <person name="Ishikawa T."/>
            <person name="Jakt M."/>
            <person name="Kanapin A."/>
            <person name="Katoh M."/>
            <person name="Kawasawa Y."/>
            <person name="Kelso J."/>
            <person name="Kitamura H."/>
            <person name="Kitano H."/>
            <person name="Kollias G."/>
            <person name="Krishnan S.P."/>
            <person name="Kruger A."/>
            <person name="Kummerfeld S.K."/>
            <person name="Kurochkin I.V."/>
            <person name="Lareau L.F."/>
            <person name="Lazarevic D."/>
            <person name="Lipovich L."/>
            <person name="Liu J."/>
            <person name="Liuni S."/>
            <person name="McWilliam S."/>
            <person name="Madan Babu M."/>
            <person name="Madera M."/>
            <person name="Marchionni L."/>
            <person name="Matsuda H."/>
            <person name="Matsuzawa S."/>
            <person name="Miki H."/>
            <person name="Mignone F."/>
            <person name="Miyake S."/>
            <person name="Morris K."/>
            <person name="Mottagui-Tabar S."/>
            <person name="Mulder N."/>
            <person name="Nakano N."/>
            <person name="Nakauchi H."/>
            <person name="Ng P."/>
            <person name="Nilsson R."/>
            <person name="Nishiguchi S."/>
            <person name="Nishikawa S."/>
            <person name="Nori F."/>
            <person name="Ohara O."/>
            <person name="Okazaki Y."/>
            <person name="Orlando V."/>
            <person name="Pang K.C."/>
            <person name="Pavan W.J."/>
            <person name="Pavesi G."/>
            <person name="Pesole G."/>
            <person name="Petrovsky N."/>
            <person name="Piazza S."/>
            <person name="Reed J."/>
            <person name="Reid J.F."/>
            <person name="Ring B.Z."/>
            <person name="Ringwald M."/>
            <person name="Rost B."/>
            <person name="Ruan Y."/>
            <person name="Salzberg S.L."/>
            <person name="Sandelin A."/>
            <person name="Schneider C."/>
            <person name="Schoenbach C."/>
            <person name="Sekiguchi K."/>
            <person name="Semple C.A."/>
            <person name="Seno S."/>
            <person name="Sessa L."/>
            <person name="Sheng Y."/>
            <person name="Shibata Y."/>
            <person name="Shimada H."/>
            <person name="Shimada K."/>
            <person name="Silva D."/>
            <person name="Sinclair B."/>
            <person name="Sperling S."/>
            <person name="Stupka E."/>
            <person name="Sugiura K."/>
            <person name="Sultana R."/>
            <person name="Takenaka Y."/>
            <person name="Taki K."/>
            <person name="Tammoja K."/>
            <person name="Tan S.L."/>
            <person name="Tang S."/>
            <person name="Taylor M.S."/>
            <person name="Tegner J."/>
            <person name="Teichmann S.A."/>
            <person name="Ueda H.R."/>
            <person name="van Nimwegen E."/>
            <person name="Verardo R."/>
            <person name="Wei C.L."/>
            <person name="Yagi K."/>
            <person name="Yamanishi H."/>
            <person name="Zabarovsky E."/>
            <person name="Zhu S."/>
            <person name="Zimmer A."/>
            <person name="Hide W."/>
            <person name="Bult C."/>
            <person name="Grimmond S.M."/>
            <person name="Teasdale R.D."/>
            <person name="Liu E.T."/>
            <person name="Brusic V."/>
            <person name="Quackenbush J."/>
            <person name="Wahlestedt C."/>
            <person name="Mattick J.S."/>
            <person name="Hume D.A."/>
            <person name="Kai C."/>
            <person name="Sasaki D."/>
            <person name="Tomaru Y."/>
            <person name="Fukuda S."/>
            <person name="Kanamori-Katayama M."/>
            <person name="Suzuki M."/>
            <person name="Aoki J."/>
            <person name="Arakawa T."/>
            <person name="Iida J."/>
            <person name="Imamura K."/>
            <person name="Itoh M."/>
            <person name="Kato T."/>
            <person name="Kawaji H."/>
            <person name="Kawagashira N."/>
            <person name="Kawashima T."/>
            <person name="Kojima M."/>
            <person name="Kondo S."/>
            <person name="Konno H."/>
            <person name="Nakano K."/>
            <person name="Ninomiya N."/>
            <person name="Nishio T."/>
            <person name="Okada M."/>
            <person name="Plessy C."/>
            <person name="Shibata K."/>
            <person name="Shiraki T."/>
            <person name="Suzuki S."/>
            <person name="Tagami M."/>
            <person name="Waki K."/>
            <person name="Watahiki A."/>
            <person name="Okamura-Oho Y."/>
            <person name="Suzuki H."/>
            <person name="Kawai J."/>
            <person name="Hayashizaki Y."/>
        </authorList>
    </citation>
    <scope>NUCLEOTIDE SEQUENCE [LARGE SCALE MRNA]</scope>
    <source>
        <strain>C57BL/6J</strain>
        <strain>DBA/2J</strain>
        <tissue>Cerebellum</tissue>
        <tissue>Egg</tissue>
        <tissue>Olfactory bulb</tissue>
        <tissue>Testis</tissue>
        <tissue>Tongue</tissue>
    </source>
</reference>
<reference key="2">
    <citation type="journal article" date="2004" name="Genome Res.">
        <title>The status, quality, and expansion of the NIH full-length cDNA project: the Mammalian Gene Collection (MGC).</title>
        <authorList>
            <consortium name="The MGC Project Team"/>
        </authorList>
    </citation>
    <scope>NUCLEOTIDE SEQUENCE [LARGE SCALE MRNA]</scope>
    <source>
        <strain>129</strain>
        <strain>C57BL/6J</strain>
        <tissue>Brain</tissue>
        <tissue>Mammary tumor</tissue>
    </source>
</reference>
<reference key="3">
    <citation type="journal article" date="2010" name="Cell">
        <title>A tissue-specific atlas of mouse protein phosphorylation and expression.</title>
        <authorList>
            <person name="Huttlin E.L."/>
            <person name="Jedrychowski M.P."/>
            <person name="Elias J.E."/>
            <person name="Goswami T."/>
            <person name="Rad R."/>
            <person name="Beausoleil S.A."/>
            <person name="Villen J."/>
            <person name="Haas W."/>
            <person name="Sowa M.E."/>
            <person name="Gygi S.P."/>
        </authorList>
    </citation>
    <scope>IDENTIFICATION BY MASS SPECTROMETRY [LARGE SCALE ANALYSIS]</scope>
    <source>
        <tissue>Testis</tissue>
    </source>
</reference>